<name>SURE_CAMFF</name>
<feature type="chain" id="PRO_1000007715" description="5'-nucleotidase SurE">
    <location>
        <begin position="1"/>
        <end position="256"/>
    </location>
</feature>
<feature type="binding site" evidence="1">
    <location>
        <position position="9"/>
    </location>
    <ligand>
        <name>a divalent metal cation</name>
        <dbReference type="ChEBI" id="CHEBI:60240"/>
    </ligand>
</feature>
<feature type="binding site" evidence="1">
    <location>
        <position position="10"/>
    </location>
    <ligand>
        <name>a divalent metal cation</name>
        <dbReference type="ChEBI" id="CHEBI:60240"/>
    </ligand>
</feature>
<feature type="binding site" evidence="1">
    <location>
        <position position="40"/>
    </location>
    <ligand>
        <name>a divalent metal cation</name>
        <dbReference type="ChEBI" id="CHEBI:60240"/>
    </ligand>
</feature>
<feature type="binding site" evidence="1">
    <location>
        <position position="94"/>
    </location>
    <ligand>
        <name>a divalent metal cation</name>
        <dbReference type="ChEBI" id="CHEBI:60240"/>
    </ligand>
</feature>
<reference key="1">
    <citation type="submission" date="2006-11" db="EMBL/GenBank/DDBJ databases">
        <title>Sequence of Campylobacter fetus subsp. fetus 82-40.</title>
        <authorList>
            <person name="Fouts D.E."/>
            <person name="Nelson K.E."/>
        </authorList>
    </citation>
    <scope>NUCLEOTIDE SEQUENCE [LARGE SCALE GENOMIC DNA]</scope>
    <source>
        <strain>82-40</strain>
    </source>
</reference>
<gene>
    <name evidence="1" type="primary">surE</name>
    <name type="ordered locus">CFF8240_0325</name>
</gene>
<proteinExistence type="inferred from homology"/>
<dbReference type="EC" id="3.1.3.5" evidence="1"/>
<dbReference type="EMBL" id="CP000487">
    <property type="protein sequence ID" value="ABK83196.1"/>
    <property type="molecule type" value="Genomic_DNA"/>
</dbReference>
<dbReference type="RefSeq" id="WP_002848447.1">
    <property type="nucleotide sequence ID" value="NC_008599.1"/>
</dbReference>
<dbReference type="SMR" id="A0RMU4"/>
<dbReference type="GeneID" id="61064169"/>
<dbReference type="KEGG" id="cff:CFF8240_0325"/>
<dbReference type="eggNOG" id="COG0496">
    <property type="taxonomic scope" value="Bacteria"/>
</dbReference>
<dbReference type="HOGENOM" id="CLU_045192_1_2_7"/>
<dbReference type="Proteomes" id="UP000000760">
    <property type="component" value="Chromosome"/>
</dbReference>
<dbReference type="GO" id="GO:0005737">
    <property type="term" value="C:cytoplasm"/>
    <property type="evidence" value="ECO:0007669"/>
    <property type="project" value="UniProtKB-SubCell"/>
</dbReference>
<dbReference type="GO" id="GO:0008254">
    <property type="term" value="F:3'-nucleotidase activity"/>
    <property type="evidence" value="ECO:0007669"/>
    <property type="project" value="TreeGrafter"/>
</dbReference>
<dbReference type="GO" id="GO:0008253">
    <property type="term" value="F:5'-nucleotidase activity"/>
    <property type="evidence" value="ECO:0007669"/>
    <property type="project" value="UniProtKB-UniRule"/>
</dbReference>
<dbReference type="GO" id="GO:0004309">
    <property type="term" value="F:exopolyphosphatase activity"/>
    <property type="evidence" value="ECO:0007669"/>
    <property type="project" value="TreeGrafter"/>
</dbReference>
<dbReference type="GO" id="GO:0046872">
    <property type="term" value="F:metal ion binding"/>
    <property type="evidence" value="ECO:0007669"/>
    <property type="project" value="UniProtKB-UniRule"/>
</dbReference>
<dbReference type="GO" id="GO:0000166">
    <property type="term" value="F:nucleotide binding"/>
    <property type="evidence" value="ECO:0007669"/>
    <property type="project" value="UniProtKB-KW"/>
</dbReference>
<dbReference type="FunFam" id="3.40.1210.10:FF:000001">
    <property type="entry name" value="5'/3'-nucleotidase SurE"/>
    <property type="match status" value="1"/>
</dbReference>
<dbReference type="Gene3D" id="3.40.1210.10">
    <property type="entry name" value="Survival protein SurE-like phosphatase/nucleotidase"/>
    <property type="match status" value="1"/>
</dbReference>
<dbReference type="HAMAP" id="MF_00060">
    <property type="entry name" value="SurE"/>
    <property type="match status" value="1"/>
</dbReference>
<dbReference type="InterPro" id="IPR030048">
    <property type="entry name" value="SurE"/>
</dbReference>
<dbReference type="InterPro" id="IPR002828">
    <property type="entry name" value="SurE-like_Pase/nucleotidase"/>
</dbReference>
<dbReference type="InterPro" id="IPR036523">
    <property type="entry name" value="SurE-like_sf"/>
</dbReference>
<dbReference type="NCBIfam" id="NF001490">
    <property type="entry name" value="PRK00346.1-4"/>
    <property type="match status" value="1"/>
</dbReference>
<dbReference type="NCBIfam" id="NF001494">
    <property type="entry name" value="PRK00346.2-4"/>
    <property type="match status" value="1"/>
</dbReference>
<dbReference type="NCBIfam" id="TIGR00087">
    <property type="entry name" value="surE"/>
    <property type="match status" value="1"/>
</dbReference>
<dbReference type="PANTHER" id="PTHR30457">
    <property type="entry name" value="5'-NUCLEOTIDASE SURE"/>
    <property type="match status" value="1"/>
</dbReference>
<dbReference type="PANTHER" id="PTHR30457:SF12">
    <property type="entry name" value="5'_3'-NUCLEOTIDASE SURE"/>
    <property type="match status" value="1"/>
</dbReference>
<dbReference type="Pfam" id="PF01975">
    <property type="entry name" value="SurE"/>
    <property type="match status" value="1"/>
</dbReference>
<dbReference type="SUPFAM" id="SSF64167">
    <property type="entry name" value="SurE-like"/>
    <property type="match status" value="1"/>
</dbReference>
<sequence>MKEILITNDDGFEALGIRALRNALKDIAKVTVVAPSSEKSACAHSITLTRPLRFIQLDDGFFKLDDATPSDCIYLALETMYKHKKPDLIISGINHGANLGEDITYSGTCGGAMEGTLQGVASMAISLLYKNDSIDKYGFDLACEISADIVKNIFENGFPLNGREFLNLNIPAVPKNEYKGLKIVPAGHQAYNTNAELHRNPRGLEYYWLGTPNIHYLKENDNECDLAVTFDGYASLTPIKLDMTAHHSINRLKSWI</sequence>
<evidence type="ECO:0000255" key="1">
    <source>
        <dbReference type="HAMAP-Rule" id="MF_00060"/>
    </source>
</evidence>
<protein>
    <recommendedName>
        <fullName evidence="1">5'-nucleotidase SurE</fullName>
        <ecNumber evidence="1">3.1.3.5</ecNumber>
    </recommendedName>
    <alternativeName>
        <fullName evidence="1">Nucleoside 5'-monophosphate phosphohydrolase</fullName>
    </alternativeName>
</protein>
<keyword id="KW-0963">Cytoplasm</keyword>
<keyword id="KW-0378">Hydrolase</keyword>
<keyword id="KW-0479">Metal-binding</keyword>
<keyword id="KW-0547">Nucleotide-binding</keyword>
<comment type="function">
    <text evidence="1">Nucleotidase that shows phosphatase activity on nucleoside 5'-monophosphates.</text>
</comment>
<comment type="catalytic activity">
    <reaction evidence="1">
        <text>a ribonucleoside 5'-phosphate + H2O = a ribonucleoside + phosphate</text>
        <dbReference type="Rhea" id="RHEA:12484"/>
        <dbReference type="ChEBI" id="CHEBI:15377"/>
        <dbReference type="ChEBI" id="CHEBI:18254"/>
        <dbReference type="ChEBI" id="CHEBI:43474"/>
        <dbReference type="ChEBI" id="CHEBI:58043"/>
        <dbReference type="EC" id="3.1.3.5"/>
    </reaction>
</comment>
<comment type="cofactor">
    <cofactor evidence="1">
        <name>a divalent metal cation</name>
        <dbReference type="ChEBI" id="CHEBI:60240"/>
    </cofactor>
    <text evidence="1">Binds 1 divalent metal cation per subunit.</text>
</comment>
<comment type="subcellular location">
    <subcellularLocation>
        <location evidence="1">Cytoplasm</location>
    </subcellularLocation>
</comment>
<comment type="similarity">
    <text evidence="1">Belongs to the SurE nucleotidase family.</text>
</comment>
<accession>A0RMU4</accession>
<organism>
    <name type="scientific">Campylobacter fetus subsp. fetus (strain 82-40)</name>
    <dbReference type="NCBI Taxonomy" id="360106"/>
    <lineage>
        <taxon>Bacteria</taxon>
        <taxon>Pseudomonadati</taxon>
        <taxon>Campylobacterota</taxon>
        <taxon>Epsilonproteobacteria</taxon>
        <taxon>Campylobacterales</taxon>
        <taxon>Campylobacteraceae</taxon>
        <taxon>Campylobacter</taxon>
    </lineage>
</organism>